<proteinExistence type="inferred from homology"/>
<comment type="function">
    <text evidence="1">Catalyzes the NADPH-dependent reduction of 7-cyano-7-deazaguanine (preQ0) to 7-aminomethyl-7-deazaguanine (preQ1).</text>
</comment>
<comment type="catalytic activity">
    <reaction evidence="1">
        <text>7-aminomethyl-7-carbaguanine + 2 NADP(+) = 7-cyano-7-deazaguanine + 2 NADPH + 3 H(+)</text>
        <dbReference type="Rhea" id="RHEA:13409"/>
        <dbReference type="ChEBI" id="CHEBI:15378"/>
        <dbReference type="ChEBI" id="CHEBI:45075"/>
        <dbReference type="ChEBI" id="CHEBI:57783"/>
        <dbReference type="ChEBI" id="CHEBI:58349"/>
        <dbReference type="ChEBI" id="CHEBI:58703"/>
        <dbReference type="EC" id="1.7.1.13"/>
    </reaction>
</comment>
<comment type="pathway">
    <text evidence="1">tRNA modification; tRNA-queuosine biosynthesis.</text>
</comment>
<comment type="subcellular location">
    <subcellularLocation>
        <location evidence="1">Cytoplasm</location>
    </subcellularLocation>
</comment>
<comment type="similarity">
    <text evidence="1">Belongs to the GTP cyclohydrolase I family. QueF type 1 subfamily.</text>
</comment>
<dbReference type="EC" id="1.7.1.13" evidence="1"/>
<dbReference type="EMBL" id="CP000903">
    <property type="protein sequence ID" value="ABY42506.1"/>
    <property type="molecule type" value="Genomic_DNA"/>
</dbReference>
<dbReference type="RefSeq" id="WP_002086808.1">
    <property type="nucleotide sequence ID" value="NC_010184.1"/>
</dbReference>
<dbReference type="SMR" id="A9VKS1"/>
<dbReference type="GeneID" id="66263612"/>
<dbReference type="KEGG" id="bwe:BcerKBAB4_1259"/>
<dbReference type="eggNOG" id="COG0780">
    <property type="taxonomic scope" value="Bacteria"/>
</dbReference>
<dbReference type="HOGENOM" id="CLU_102489_0_1_9"/>
<dbReference type="UniPathway" id="UPA00392"/>
<dbReference type="Proteomes" id="UP000002154">
    <property type="component" value="Chromosome"/>
</dbReference>
<dbReference type="GO" id="GO:0005737">
    <property type="term" value="C:cytoplasm"/>
    <property type="evidence" value="ECO:0007669"/>
    <property type="project" value="UniProtKB-SubCell"/>
</dbReference>
<dbReference type="GO" id="GO:0033739">
    <property type="term" value="F:preQ1 synthase activity"/>
    <property type="evidence" value="ECO:0007669"/>
    <property type="project" value="UniProtKB-UniRule"/>
</dbReference>
<dbReference type="GO" id="GO:0008616">
    <property type="term" value="P:queuosine biosynthetic process"/>
    <property type="evidence" value="ECO:0007669"/>
    <property type="project" value="UniProtKB-UniRule"/>
</dbReference>
<dbReference type="GO" id="GO:0006400">
    <property type="term" value="P:tRNA modification"/>
    <property type="evidence" value="ECO:0007669"/>
    <property type="project" value="UniProtKB-UniRule"/>
</dbReference>
<dbReference type="Gene3D" id="3.30.1130.10">
    <property type="match status" value="1"/>
</dbReference>
<dbReference type="HAMAP" id="MF_00818">
    <property type="entry name" value="QueF_type1"/>
    <property type="match status" value="1"/>
</dbReference>
<dbReference type="InterPro" id="IPR043133">
    <property type="entry name" value="GTP-CH-I_C/QueF"/>
</dbReference>
<dbReference type="InterPro" id="IPR050084">
    <property type="entry name" value="NADPH_dep_7-cyano-7-deazaG_red"/>
</dbReference>
<dbReference type="InterPro" id="IPR029500">
    <property type="entry name" value="QueF"/>
</dbReference>
<dbReference type="InterPro" id="IPR016856">
    <property type="entry name" value="QueF_type1"/>
</dbReference>
<dbReference type="NCBIfam" id="TIGR03139">
    <property type="entry name" value="QueF-II"/>
    <property type="match status" value="1"/>
</dbReference>
<dbReference type="PANTHER" id="PTHR34354">
    <property type="entry name" value="NADPH-DEPENDENT 7-CYANO-7-DEAZAGUANINE REDUCTASE"/>
    <property type="match status" value="1"/>
</dbReference>
<dbReference type="PANTHER" id="PTHR34354:SF1">
    <property type="entry name" value="NADPH-DEPENDENT 7-CYANO-7-DEAZAGUANINE REDUCTASE"/>
    <property type="match status" value="1"/>
</dbReference>
<dbReference type="Pfam" id="PF14489">
    <property type="entry name" value="QueF"/>
    <property type="match status" value="1"/>
</dbReference>
<dbReference type="PIRSF" id="PIRSF027377">
    <property type="entry name" value="Nitrile_oxidored_QueF"/>
    <property type="match status" value="1"/>
</dbReference>
<dbReference type="SUPFAM" id="SSF55620">
    <property type="entry name" value="Tetrahydrobiopterin biosynthesis enzymes-like"/>
    <property type="match status" value="1"/>
</dbReference>
<organism>
    <name type="scientific">Bacillus mycoides (strain KBAB4)</name>
    <name type="common">Bacillus weihenstephanensis</name>
    <dbReference type="NCBI Taxonomy" id="315730"/>
    <lineage>
        <taxon>Bacteria</taxon>
        <taxon>Bacillati</taxon>
        <taxon>Bacillota</taxon>
        <taxon>Bacilli</taxon>
        <taxon>Bacillales</taxon>
        <taxon>Bacillaceae</taxon>
        <taxon>Bacillus</taxon>
        <taxon>Bacillus cereus group</taxon>
    </lineage>
</organism>
<protein>
    <recommendedName>
        <fullName evidence="1">NADPH-dependent 7-cyano-7-deazaguanine reductase</fullName>
        <ecNumber evidence="1">1.7.1.13</ecNumber>
    </recommendedName>
    <alternativeName>
        <fullName evidence="1">7-cyano-7-carbaguanine reductase</fullName>
    </alternativeName>
    <alternativeName>
        <fullName evidence="1">NADPH-dependent nitrile oxidoreductase</fullName>
    </alternativeName>
    <alternativeName>
        <fullName evidence="1">PreQ(0) reductase</fullName>
    </alternativeName>
</protein>
<keyword id="KW-0963">Cytoplasm</keyword>
<keyword id="KW-0521">NADP</keyword>
<keyword id="KW-0560">Oxidoreductase</keyword>
<keyword id="KW-0671">Queuosine biosynthesis</keyword>
<reference key="1">
    <citation type="journal article" date="2008" name="Chem. Biol. Interact.">
        <title>Extending the Bacillus cereus group genomics to putative food-borne pathogens of different toxicity.</title>
        <authorList>
            <person name="Lapidus A."/>
            <person name="Goltsman E."/>
            <person name="Auger S."/>
            <person name="Galleron N."/>
            <person name="Segurens B."/>
            <person name="Dossat C."/>
            <person name="Land M.L."/>
            <person name="Broussolle V."/>
            <person name="Brillard J."/>
            <person name="Guinebretiere M.-H."/>
            <person name="Sanchis V."/>
            <person name="Nguen-the C."/>
            <person name="Lereclus D."/>
            <person name="Richardson P."/>
            <person name="Wincker P."/>
            <person name="Weissenbach J."/>
            <person name="Ehrlich S.D."/>
            <person name="Sorokin A."/>
        </authorList>
    </citation>
    <scope>NUCLEOTIDE SEQUENCE [LARGE SCALE GENOMIC DNA]</scope>
    <source>
        <strain>KBAB4</strain>
    </source>
</reference>
<feature type="chain" id="PRO_1000134296" description="NADPH-dependent 7-cyano-7-deazaguanine reductase">
    <location>
        <begin position="1"/>
        <end position="165"/>
    </location>
</feature>
<feature type="active site" description="Thioimide intermediate" evidence="1">
    <location>
        <position position="56"/>
    </location>
</feature>
<feature type="active site" description="Proton donor" evidence="1">
    <location>
        <position position="63"/>
    </location>
</feature>
<feature type="binding site" evidence="1">
    <location>
        <begin position="78"/>
        <end position="80"/>
    </location>
    <ligand>
        <name>substrate</name>
    </ligand>
</feature>
<feature type="binding site" evidence="1">
    <location>
        <begin position="97"/>
        <end position="98"/>
    </location>
    <ligand>
        <name>substrate</name>
    </ligand>
</feature>
<gene>
    <name evidence="1" type="primary">queF</name>
    <name type="ordered locus">BcerKBAB4_1259</name>
</gene>
<name>QUEF_BACMK</name>
<evidence type="ECO:0000255" key="1">
    <source>
        <dbReference type="HAMAP-Rule" id="MF_00818"/>
    </source>
</evidence>
<accession>A9VKS1</accession>
<sequence length="165" mass="19555">MAGRLDEDLKDVTLLGNQNTKYLFEYSPEILEVFDNNHPNRDYFVKFNCPEFTSLCPKTGQPDFATIYISYIPEQRMVESKSLKLYLFSFRNHGDFHEDCMNVIMNDLIKLMDPRYIEVWGKFTPRGGISIDPYCNYGRPGTKYEKMADYRMMNHDLYPEKIDNR</sequence>